<proteinExistence type="inferred from homology"/>
<reference key="1">
    <citation type="journal article" date="2006" name="PLoS Genet.">
        <title>Who ate whom? Adaptive Helicobacter genomic changes that accompanied a host jump from early humans to large felines.</title>
        <authorList>
            <person name="Eppinger M."/>
            <person name="Baar C."/>
            <person name="Linz B."/>
            <person name="Raddatz G."/>
            <person name="Lanz C."/>
            <person name="Keller H."/>
            <person name="Morelli G."/>
            <person name="Gressmann H."/>
            <person name="Achtman M."/>
            <person name="Schuster S.C."/>
        </authorList>
    </citation>
    <scope>NUCLEOTIDE SEQUENCE [LARGE SCALE GENOMIC DNA]</scope>
    <source>
        <strain>Sheeba</strain>
    </source>
</reference>
<organism>
    <name type="scientific">Helicobacter acinonychis (strain Sheeba)</name>
    <dbReference type="NCBI Taxonomy" id="382638"/>
    <lineage>
        <taxon>Bacteria</taxon>
        <taxon>Pseudomonadati</taxon>
        <taxon>Campylobacterota</taxon>
        <taxon>Epsilonproteobacteria</taxon>
        <taxon>Campylobacterales</taxon>
        <taxon>Helicobacteraceae</taxon>
        <taxon>Helicobacter</taxon>
    </lineage>
</organism>
<protein>
    <recommendedName>
        <fullName evidence="1">Protein translocase subunit SecA</fullName>
        <ecNumber evidence="1">7.4.2.8</ecNumber>
    </recommendedName>
</protein>
<dbReference type="EC" id="7.4.2.8" evidence="1"/>
<dbReference type="EMBL" id="AM260522">
    <property type="protein sequence ID" value="CAJ99684.1"/>
    <property type="status" value="ALT_INIT"/>
    <property type="molecule type" value="Genomic_DNA"/>
</dbReference>
<dbReference type="RefSeq" id="WP_011577796.1">
    <property type="nucleotide sequence ID" value="NC_008229.1"/>
</dbReference>
<dbReference type="SMR" id="Q17XE2"/>
<dbReference type="STRING" id="382638.Hac_0906"/>
<dbReference type="GeneID" id="31758307"/>
<dbReference type="KEGG" id="hac:Hac_0906"/>
<dbReference type="eggNOG" id="COG0653">
    <property type="taxonomic scope" value="Bacteria"/>
</dbReference>
<dbReference type="HOGENOM" id="CLU_005314_3_0_7"/>
<dbReference type="OrthoDB" id="9805579at2"/>
<dbReference type="BioCyc" id="HACI382638:HAC_RS03900-MONOMER"/>
<dbReference type="Proteomes" id="UP000000775">
    <property type="component" value="Chromosome"/>
</dbReference>
<dbReference type="GO" id="GO:0031522">
    <property type="term" value="C:cell envelope Sec protein transport complex"/>
    <property type="evidence" value="ECO:0007669"/>
    <property type="project" value="TreeGrafter"/>
</dbReference>
<dbReference type="GO" id="GO:0005829">
    <property type="term" value="C:cytosol"/>
    <property type="evidence" value="ECO:0007669"/>
    <property type="project" value="TreeGrafter"/>
</dbReference>
<dbReference type="GO" id="GO:0005886">
    <property type="term" value="C:plasma membrane"/>
    <property type="evidence" value="ECO:0007669"/>
    <property type="project" value="UniProtKB-SubCell"/>
</dbReference>
<dbReference type="GO" id="GO:0005524">
    <property type="term" value="F:ATP binding"/>
    <property type="evidence" value="ECO:0007669"/>
    <property type="project" value="UniProtKB-UniRule"/>
</dbReference>
<dbReference type="GO" id="GO:0046872">
    <property type="term" value="F:metal ion binding"/>
    <property type="evidence" value="ECO:0007669"/>
    <property type="project" value="UniProtKB-KW"/>
</dbReference>
<dbReference type="GO" id="GO:0008564">
    <property type="term" value="F:protein-exporting ATPase activity"/>
    <property type="evidence" value="ECO:0007669"/>
    <property type="project" value="UniProtKB-EC"/>
</dbReference>
<dbReference type="GO" id="GO:0065002">
    <property type="term" value="P:intracellular protein transmembrane transport"/>
    <property type="evidence" value="ECO:0007669"/>
    <property type="project" value="UniProtKB-UniRule"/>
</dbReference>
<dbReference type="GO" id="GO:0017038">
    <property type="term" value="P:protein import"/>
    <property type="evidence" value="ECO:0007669"/>
    <property type="project" value="InterPro"/>
</dbReference>
<dbReference type="GO" id="GO:0006605">
    <property type="term" value="P:protein targeting"/>
    <property type="evidence" value="ECO:0007669"/>
    <property type="project" value="UniProtKB-UniRule"/>
</dbReference>
<dbReference type="GO" id="GO:0043952">
    <property type="term" value="P:protein transport by the Sec complex"/>
    <property type="evidence" value="ECO:0007669"/>
    <property type="project" value="TreeGrafter"/>
</dbReference>
<dbReference type="CDD" id="cd17928">
    <property type="entry name" value="DEXDc_SecA"/>
    <property type="match status" value="1"/>
</dbReference>
<dbReference type="CDD" id="cd18803">
    <property type="entry name" value="SF2_C_secA"/>
    <property type="match status" value="1"/>
</dbReference>
<dbReference type="FunFam" id="3.40.50.300:FF:000429">
    <property type="entry name" value="Preprotein translocase subunit SecA"/>
    <property type="match status" value="1"/>
</dbReference>
<dbReference type="FunFam" id="3.90.1440.10:FF:000001">
    <property type="entry name" value="Preprotein translocase subunit SecA"/>
    <property type="match status" value="1"/>
</dbReference>
<dbReference type="Gene3D" id="1.10.3060.10">
    <property type="entry name" value="Helical scaffold and wing domains of SecA"/>
    <property type="match status" value="1"/>
</dbReference>
<dbReference type="Gene3D" id="3.40.50.300">
    <property type="entry name" value="P-loop containing nucleotide triphosphate hydrolases"/>
    <property type="match status" value="3"/>
</dbReference>
<dbReference type="Gene3D" id="3.90.1440.10">
    <property type="entry name" value="SecA, preprotein cross-linking domain"/>
    <property type="match status" value="1"/>
</dbReference>
<dbReference type="HAMAP" id="MF_01382">
    <property type="entry name" value="SecA"/>
    <property type="match status" value="1"/>
</dbReference>
<dbReference type="InterPro" id="IPR014001">
    <property type="entry name" value="Helicase_ATP-bd"/>
</dbReference>
<dbReference type="InterPro" id="IPR001650">
    <property type="entry name" value="Helicase_C-like"/>
</dbReference>
<dbReference type="InterPro" id="IPR027417">
    <property type="entry name" value="P-loop_NTPase"/>
</dbReference>
<dbReference type="InterPro" id="IPR004027">
    <property type="entry name" value="SEC_C_motif"/>
</dbReference>
<dbReference type="InterPro" id="IPR000185">
    <property type="entry name" value="SecA"/>
</dbReference>
<dbReference type="InterPro" id="IPR020937">
    <property type="entry name" value="SecA_CS"/>
</dbReference>
<dbReference type="InterPro" id="IPR011115">
    <property type="entry name" value="SecA_DEAD"/>
</dbReference>
<dbReference type="InterPro" id="IPR014018">
    <property type="entry name" value="SecA_motor_DEAD"/>
</dbReference>
<dbReference type="InterPro" id="IPR011130">
    <property type="entry name" value="SecA_preprotein_X-link_dom"/>
</dbReference>
<dbReference type="InterPro" id="IPR044722">
    <property type="entry name" value="SecA_SF2_C"/>
</dbReference>
<dbReference type="InterPro" id="IPR011116">
    <property type="entry name" value="SecA_Wing/Scaffold"/>
</dbReference>
<dbReference type="InterPro" id="IPR036266">
    <property type="entry name" value="SecA_Wing/Scaffold_sf"/>
</dbReference>
<dbReference type="InterPro" id="IPR036670">
    <property type="entry name" value="SecA_X-link_sf"/>
</dbReference>
<dbReference type="NCBIfam" id="NF006630">
    <property type="entry name" value="PRK09200.1"/>
    <property type="match status" value="1"/>
</dbReference>
<dbReference type="NCBIfam" id="TIGR00963">
    <property type="entry name" value="secA"/>
    <property type="match status" value="1"/>
</dbReference>
<dbReference type="PANTHER" id="PTHR30612:SF0">
    <property type="entry name" value="CHLOROPLAST PROTEIN-TRANSPORTING ATPASE"/>
    <property type="match status" value="1"/>
</dbReference>
<dbReference type="PANTHER" id="PTHR30612">
    <property type="entry name" value="SECA INNER MEMBRANE COMPONENT OF SEC PROTEIN SECRETION SYSTEM"/>
    <property type="match status" value="1"/>
</dbReference>
<dbReference type="Pfam" id="PF21090">
    <property type="entry name" value="P-loop_SecA"/>
    <property type="match status" value="1"/>
</dbReference>
<dbReference type="Pfam" id="PF02810">
    <property type="entry name" value="SEC-C"/>
    <property type="match status" value="1"/>
</dbReference>
<dbReference type="Pfam" id="PF07517">
    <property type="entry name" value="SecA_DEAD"/>
    <property type="match status" value="1"/>
</dbReference>
<dbReference type="Pfam" id="PF01043">
    <property type="entry name" value="SecA_PP_bind"/>
    <property type="match status" value="1"/>
</dbReference>
<dbReference type="Pfam" id="PF07516">
    <property type="entry name" value="SecA_SW"/>
    <property type="match status" value="1"/>
</dbReference>
<dbReference type="PRINTS" id="PR00906">
    <property type="entry name" value="SECA"/>
</dbReference>
<dbReference type="SMART" id="SM00957">
    <property type="entry name" value="SecA_DEAD"/>
    <property type="match status" value="1"/>
</dbReference>
<dbReference type="SMART" id="SM00958">
    <property type="entry name" value="SecA_PP_bind"/>
    <property type="match status" value="1"/>
</dbReference>
<dbReference type="SUPFAM" id="SSF81886">
    <property type="entry name" value="Helical scaffold and wing domains of SecA"/>
    <property type="match status" value="1"/>
</dbReference>
<dbReference type="SUPFAM" id="SSF52540">
    <property type="entry name" value="P-loop containing nucleoside triphosphate hydrolases"/>
    <property type="match status" value="2"/>
</dbReference>
<dbReference type="SUPFAM" id="SSF81767">
    <property type="entry name" value="Pre-protein crosslinking domain of SecA"/>
    <property type="match status" value="1"/>
</dbReference>
<dbReference type="PROSITE" id="PS01312">
    <property type="entry name" value="SECA"/>
    <property type="match status" value="1"/>
</dbReference>
<dbReference type="PROSITE" id="PS51196">
    <property type="entry name" value="SECA_MOTOR_DEAD"/>
    <property type="match status" value="1"/>
</dbReference>
<accession>Q17XE2</accession>
<sequence>MIKAIIGKIIGTRNDRWIKQYKKKVLAINTLEPTYEKMSDTELQNAFEELKKRVRSVEKDLQEKTLLEVLPESFAITREASKRVLNMCHFDVQLIGGMVLNDGKIAEMKTGEGKTLVATLAVALNAMKGESVYVVTVNDYLAHRDSKEMEPLYHFLGYSVGTITASVRDDDERLEIYSKDIVYGTNNEFGFDYLRDNMKYSLEHKVQKSHAFAIVDEVDSILIDEARTPLIISGPVNRRMENYNKADEVAKSMQVEVDFTIDEKNRAILITEEGIKKAENLFGVDNLYKIENATLSHHLDQALKANYLFFIDKDYIVANNEVVIVDEFTGRLSEGRRFSEGLHQALEAKEGVSIKEESQTLADITFQNYFRMFSKLSGMTGTAQTEATEFLEIYNLEVVSIPTNLAIKRKDLNDLIYKSEKEKFDAVILKIKELHDKGQPVLVGTASIEKSETLHALLKKERIPHTVLNAKQHTKEAEIIKDAGLKGAVTIATNMAGRGVDIKLTDEIKELGGLYIIGTERHESRRIDNQLRGRSGRQGDPGVSQFYLSLEDNLLRIFGSDRIKGVMEKLGLKDGEHIESKLVTRAVENAQKKVENLHFESRKHLLEYDDVANEQRKSVYKFRDELLDVNYDISVKIAENREYALNQIFSKLKAFDNQNLSKEELLGLKNILKEDFNTNIELENLEQADSIENFVAEKLKNDYENKMKALDSEQRSRIERIVYLQILDNAWREHLYTMDNLKTGINLRGYNQKDPLVEYKKESYNLFLELIEDIKVEAIKTFSKIQFENEQDSSDAERYLDNFSEEREHESVTYRHEEALDEDLNAAIKVFSKTPKRNEPCPCGSGKKYKDCCAKSGPKKGLFAK</sequence>
<keyword id="KW-0067">ATP-binding</keyword>
<keyword id="KW-0997">Cell inner membrane</keyword>
<keyword id="KW-1003">Cell membrane</keyword>
<keyword id="KW-0963">Cytoplasm</keyword>
<keyword id="KW-0472">Membrane</keyword>
<keyword id="KW-0479">Metal-binding</keyword>
<keyword id="KW-0547">Nucleotide-binding</keyword>
<keyword id="KW-0653">Protein transport</keyword>
<keyword id="KW-1278">Translocase</keyword>
<keyword id="KW-0811">Translocation</keyword>
<keyword id="KW-0813">Transport</keyword>
<keyword id="KW-0862">Zinc</keyword>
<gene>
    <name evidence="1" type="primary">secA</name>
    <name type="ordered locus">Hac_0906</name>
</gene>
<name>SECA_HELAH</name>
<feature type="chain" id="PRO_0000320826" description="Protein translocase subunit SecA">
    <location>
        <begin position="1"/>
        <end position="865"/>
    </location>
</feature>
<feature type="binding site" evidence="1">
    <location>
        <position position="93"/>
    </location>
    <ligand>
        <name>ATP</name>
        <dbReference type="ChEBI" id="CHEBI:30616"/>
    </ligand>
</feature>
<feature type="binding site" evidence="1">
    <location>
        <begin position="111"/>
        <end position="115"/>
    </location>
    <ligand>
        <name>ATP</name>
        <dbReference type="ChEBI" id="CHEBI:30616"/>
    </ligand>
</feature>
<feature type="binding site" evidence="1">
    <location>
        <position position="501"/>
    </location>
    <ligand>
        <name>ATP</name>
        <dbReference type="ChEBI" id="CHEBI:30616"/>
    </ligand>
</feature>
<feature type="binding site" evidence="1">
    <location>
        <position position="841"/>
    </location>
    <ligand>
        <name>Zn(2+)</name>
        <dbReference type="ChEBI" id="CHEBI:29105"/>
    </ligand>
</feature>
<feature type="binding site" evidence="1">
    <location>
        <position position="843"/>
    </location>
    <ligand>
        <name>Zn(2+)</name>
        <dbReference type="ChEBI" id="CHEBI:29105"/>
    </ligand>
</feature>
<feature type="binding site" evidence="1">
    <location>
        <position position="852"/>
    </location>
    <ligand>
        <name>Zn(2+)</name>
        <dbReference type="ChEBI" id="CHEBI:29105"/>
    </ligand>
</feature>
<feature type="binding site" evidence="1">
    <location>
        <position position="853"/>
    </location>
    <ligand>
        <name>Zn(2+)</name>
        <dbReference type="ChEBI" id="CHEBI:29105"/>
    </ligand>
</feature>
<comment type="function">
    <text evidence="1">Part of the Sec protein translocase complex. Interacts with the SecYEG preprotein conducting channel. Has a central role in coupling the hydrolysis of ATP to the transfer of proteins into and across the cell membrane, serving as an ATP-driven molecular motor driving the stepwise translocation of polypeptide chains across the membrane.</text>
</comment>
<comment type="catalytic activity">
    <reaction evidence="1">
        <text>ATP + H2O + cellular proteinSide 1 = ADP + phosphate + cellular proteinSide 2.</text>
        <dbReference type="EC" id="7.4.2.8"/>
    </reaction>
</comment>
<comment type="cofactor">
    <cofactor evidence="1">
        <name>Zn(2+)</name>
        <dbReference type="ChEBI" id="CHEBI:29105"/>
    </cofactor>
    <text evidence="1">May bind 1 zinc ion per subunit.</text>
</comment>
<comment type="subunit">
    <text evidence="1">Monomer and homodimer. Part of the essential Sec protein translocation apparatus which comprises SecA, SecYEG and auxiliary proteins SecDF-YajC and YidC.</text>
</comment>
<comment type="subcellular location">
    <subcellularLocation>
        <location evidence="1">Cell inner membrane</location>
        <topology evidence="1">Peripheral membrane protein</topology>
        <orientation evidence="1">Cytoplasmic side</orientation>
    </subcellularLocation>
    <subcellularLocation>
        <location evidence="1">Cytoplasm</location>
    </subcellularLocation>
    <text evidence="1">Distribution is 50-50.</text>
</comment>
<comment type="similarity">
    <text evidence="1">Belongs to the SecA family.</text>
</comment>
<comment type="sequence caution" evidence="2">
    <conflict type="erroneous initiation">
        <sequence resource="EMBL-CDS" id="CAJ99684"/>
    </conflict>
    <text>Extended N-terminus.</text>
</comment>
<evidence type="ECO:0000255" key="1">
    <source>
        <dbReference type="HAMAP-Rule" id="MF_01382"/>
    </source>
</evidence>
<evidence type="ECO:0000305" key="2"/>